<gene>
    <name type="primary">CRSP2</name>
</gene>
<proteinExistence type="evidence at transcript level"/>
<feature type="signal peptide" evidence="2">
    <location>
        <begin position="1"/>
        <end position="25"/>
    </location>
</feature>
<feature type="propeptide" id="PRO_0000353081" evidence="1">
    <location>
        <begin position="26"/>
        <end position="81"/>
    </location>
</feature>
<feature type="peptide" id="PRO_0000353082" description="Calcitonin receptor-stimulating peptide 2">
    <location>
        <begin position="82"/>
        <end position="127"/>
    </location>
</feature>
<feature type="region of interest" description="Disordered" evidence="3">
    <location>
        <begin position="65"/>
        <end position="85"/>
    </location>
</feature>
<feature type="compositionally biased region" description="Polar residues" evidence="3">
    <location>
        <begin position="72"/>
        <end position="81"/>
    </location>
</feature>
<feature type="disulfide bond" evidence="1">
    <location>
        <begin position="83"/>
        <end position="88"/>
    </location>
</feature>
<dbReference type="EMBL" id="AB125103">
    <property type="protein sequence ID" value="BAD05117.1"/>
    <property type="molecule type" value="mRNA"/>
</dbReference>
<dbReference type="RefSeq" id="NP_001002947.1">
    <property type="nucleotide sequence ID" value="NM_001002947.2"/>
</dbReference>
<dbReference type="STRING" id="9615.ENSCAFP00000045918"/>
<dbReference type="PaxDb" id="9612-ENSCAFP00000031979"/>
<dbReference type="Ensembl" id="ENSCAFT00000013567.5">
    <property type="protein sequence ID" value="ENSCAFP00000012554.2"/>
    <property type="gene ID" value="ENSCAFG00000008550.6"/>
</dbReference>
<dbReference type="Ensembl" id="ENSCAFT00040037962.1">
    <property type="protein sequence ID" value="ENSCAFP00040033091.1"/>
    <property type="gene ID" value="ENSCAFG00040020517.1"/>
</dbReference>
<dbReference type="Ensembl" id="ENSCAFT00845041257.1">
    <property type="protein sequence ID" value="ENSCAFP00845032340.1"/>
    <property type="gene ID" value="ENSCAFG00845023366.1"/>
</dbReference>
<dbReference type="GeneID" id="403414"/>
<dbReference type="KEGG" id="cfa:403414"/>
<dbReference type="CTD" id="403414"/>
<dbReference type="VEuPathDB" id="HostDB:ENSCAFG00845023366"/>
<dbReference type="eggNOG" id="ENOG502RZI5">
    <property type="taxonomic scope" value="Eukaryota"/>
</dbReference>
<dbReference type="GeneTree" id="ENSGT00940000162876"/>
<dbReference type="HOGENOM" id="CLU_122444_1_0_1"/>
<dbReference type="InParanoid" id="Q75V93"/>
<dbReference type="OrthoDB" id="9929923at2759"/>
<dbReference type="Proteomes" id="UP000002254">
    <property type="component" value="Chromosome 21"/>
</dbReference>
<dbReference type="Proteomes" id="UP000694429">
    <property type="component" value="Unplaced"/>
</dbReference>
<dbReference type="Proteomes" id="UP000694542">
    <property type="component" value="Chromosome 21"/>
</dbReference>
<dbReference type="Proteomes" id="UP000805418">
    <property type="component" value="Chromosome 21"/>
</dbReference>
<dbReference type="Bgee" id="ENSCAFG00000008550">
    <property type="expression patterns" value="Expressed in hypothalamus and 18 other cell types or tissues"/>
</dbReference>
<dbReference type="GO" id="GO:0005615">
    <property type="term" value="C:extracellular space"/>
    <property type="evidence" value="ECO:0000318"/>
    <property type="project" value="GO_Central"/>
</dbReference>
<dbReference type="GO" id="GO:0031716">
    <property type="term" value="F:calcitonin receptor binding"/>
    <property type="evidence" value="ECO:0000318"/>
    <property type="project" value="GO_Central"/>
</dbReference>
<dbReference type="GO" id="GO:0005179">
    <property type="term" value="F:hormone activity"/>
    <property type="evidence" value="ECO:0007669"/>
    <property type="project" value="InterPro"/>
</dbReference>
<dbReference type="GO" id="GO:0007189">
    <property type="term" value="P:adenylate cyclase-activating G protein-coupled receptor signaling pathway"/>
    <property type="evidence" value="ECO:0000318"/>
    <property type="project" value="GO_Central"/>
</dbReference>
<dbReference type="GO" id="GO:0051480">
    <property type="term" value="P:regulation of cytosolic calcium ion concentration"/>
    <property type="evidence" value="ECO:0000318"/>
    <property type="project" value="GO_Central"/>
</dbReference>
<dbReference type="Gene3D" id="6.10.250.2190">
    <property type="match status" value="1"/>
</dbReference>
<dbReference type="InterPro" id="IPR021117">
    <property type="entry name" value="Calcitonin-like"/>
</dbReference>
<dbReference type="InterPro" id="IPR021116">
    <property type="entry name" value="Calcitonin/adrenomedullin"/>
</dbReference>
<dbReference type="PANTHER" id="PTHR10505:SF16">
    <property type="entry name" value="CALCITONIN"/>
    <property type="match status" value="1"/>
</dbReference>
<dbReference type="PANTHER" id="PTHR10505">
    <property type="entry name" value="CALCITONIN-RELATED"/>
    <property type="match status" value="1"/>
</dbReference>
<dbReference type="Pfam" id="PF00214">
    <property type="entry name" value="Calc_CGRP_IAPP"/>
    <property type="match status" value="1"/>
</dbReference>
<reference key="1">
    <citation type="journal article" date="2004" name="Biochem. Biophys. Res. Commun.">
        <title>Identification, structural determination, and biological activity of bovine and canine calcitonin receptor-stimulating peptides.</title>
        <authorList>
            <person name="Katafuchi T."/>
            <person name="Hamano K."/>
            <person name="Minamino N."/>
        </authorList>
    </citation>
    <scope>NUCLEOTIDE SEQUENCE [MRNA]</scope>
    <source>
        <tissue>Thyroid</tissue>
    </source>
</reference>
<sequence>MGFWKLSPFLAIGLLVMYQAGILQAAPFRSALENPLESATLTEDEICVLLTAVVKDYVQMKARELQQEQETEGSSLTAQKSSCKDGPCVTNRLEGWLARAERMVKNTFMPTDVDPEAFGHQHKELAA</sequence>
<comment type="subcellular location">
    <subcellularLocation>
        <location evidence="1">Secreted</location>
    </subcellularLocation>
</comment>
<comment type="similarity">
    <text evidence="4">Belongs to the calcitonin family.</text>
</comment>
<evidence type="ECO:0000250" key="1"/>
<evidence type="ECO:0000255" key="2"/>
<evidence type="ECO:0000256" key="3">
    <source>
        <dbReference type="SAM" id="MobiDB-lite"/>
    </source>
</evidence>
<evidence type="ECO:0000305" key="4"/>
<accession>Q75V93</accession>
<protein>
    <recommendedName>
        <fullName>Calcitonin receptor-stimulating peptide 2</fullName>
        <shortName>CRSP-2</shortName>
    </recommendedName>
</protein>
<keyword id="KW-1015">Disulfide bond</keyword>
<keyword id="KW-0675">Receptor</keyword>
<keyword id="KW-1185">Reference proteome</keyword>
<keyword id="KW-0964">Secreted</keyword>
<keyword id="KW-0732">Signal</keyword>
<organism>
    <name type="scientific">Canis lupus familiaris</name>
    <name type="common">Dog</name>
    <name type="synonym">Canis familiaris</name>
    <dbReference type="NCBI Taxonomy" id="9615"/>
    <lineage>
        <taxon>Eukaryota</taxon>
        <taxon>Metazoa</taxon>
        <taxon>Chordata</taxon>
        <taxon>Craniata</taxon>
        <taxon>Vertebrata</taxon>
        <taxon>Euteleostomi</taxon>
        <taxon>Mammalia</taxon>
        <taxon>Eutheria</taxon>
        <taxon>Laurasiatheria</taxon>
        <taxon>Carnivora</taxon>
        <taxon>Caniformia</taxon>
        <taxon>Canidae</taxon>
        <taxon>Canis</taxon>
    </lineage>
</organism>
<name>CRSP2_CANLF</name>